<protein>
    <recommendedName>
        <fullName evidence="1">Adenylosuccinate synthetase</fullName>
        <shortName evidence="1">AMPSase</shortName>
        <shortName evidence="1">AdSS</shortName>
        <ecNumber evidence="1">6.3.4.4</ecNumber>
    </recommendedName>
    <alternativeName>
        <fullName evidence="1">IMP--aspartate ligase</fullName>
    </alternativeName>
</protein>
<dbReference type="EC" id="6.3.4.4" evidence="1"/>
<dbReference type="EMBL" id="AM286280">
    <property type="protein sequence ID" value="CAL08220.1"/>
    <property type="molecule type" value="Genomic_DNA"/>
</dbReference>
<dbReference type="RefSeq" id="WP_003021829.1">
    <property type="nucleotide sequence ID" value="NC_008245.1"/>
</dbReference>
<dbReference type="SMR" id="Q14JN1"/>
<dbReference type="KEGG" id="ftf:FTF0204"/>
<dbReference type="HOGENOM" id="CLU_029848_0_0_6"/>
<dbReference type="UniPathway" id="UPA00075">
    <property type="reaction ID" value="UER00335"/>
</dbReference>
<dbReference type="GO" id="GO:0005737">
    <property type="term" value="C:cytoplasm"/>
    <property type="evidence" value="ECO:0007669"/>
    <property type="project" value="UniProtKB-SubCell"/>
</dbReference>
<dbReference type="GO" id="GO:0004019">
    <property type="term" value="F:adenylosuccinate synthase activity"/>
    <property type="evidence" value="ECO:0007669"/>
    <property type="project" value="UniProtKB-UniRule"/>
</dbReference>
<dbReference type="GO" id="GO:0005525">
    <property type="term" value="F:GTP binding"/>
    <property type="evidence" value="ECO:0007669"/>
    <property type="project" value="UniProtKB-UniRule"/>
</dbReference>
<dbReference type="GO" id="GO:0000287">
    <property type="term" value="F:magnesium ion binding"/>
    <property type="evidence" value="ECO:0007669"/>
    <property type="project" value="UniProtKB-UniRule"/>
</dbReference>
<dbReference type="GO" id="GO:0044208">
    <property type="term" value="P:'de novo' AMP biosynthetic process"/>
    <property type="evidence" value="ECO:0007669"/>
    <property type="project" value="UniProtKB-UniRule"/>
</dbReference>
<dbReference type="GO" id="GO:0046040">
    <property type="term" value="P:IMP metabolic process"/>
    <property type="evidence" value="ECO:0007669"/>
    <property type="project" value="TreeGrafter"/>
</dbReference>
<dbReference type="CDD" id="cd03108">
    <property type="entry name" value="AdSS"/>
    <property type="match status" value="1"/>
</dbReference>
<dbReference type="FunFam" id="1.10.300.10:FF:000001">
    <property type="entry name" value="Adenylosuccinate synthetase"/>
    <property type="match status" value="1"/>
</dbReference>
<dbReference type="FunFam" id="3.90.170.10:FF:000001">
    <property type="entry name" value="Adenylosuccinate synthetase"/>
    <property type="match status" value="1"/>
</dbReference>
<dbReference type="Gene3D" id="3.40.440.10">
    <property type="entry name" value="Adenylosuccinate Synthetase, subunit A, domain 1"/>
    <property type="match status" value="1"/>
</dbReference>
<dbReference type="Gene3D" id="1.10.300.10">
    <property type="entry name" value="Adenylosuccinate Synthetase, subunit A, domain 2"/>
    <property type="match status" value="1"/>
</dbReference>
<dbReference type="Gene3D" id="3.90.170.10">
    <property type="entry name" value="Adenylosuccinate Synthetase, subunit A, domain 3"/>
    <property type="match status" value="1"/>
</dbReference>
<dbReference type="HAMAP" id="MF_00011">
    <property type="entry name" value="Adenylosucc_synth"/>
    <property type="match status" value="1"/>
</dbReference>
<dbReference type="InterPro" id="IPR018220">
    <property type="entry name" value="Adenylosuccin_syn_GTP-bd"/>
</dbReference>
<dbReference type="InterPro" id="IPR033128">
    <property type="entry name" value="Adenylosuccin_syn_Lys_AS"/>
</dbReference>
<dbReference type="InterPro" id="IPR042109">
    <property type="entry name" value="Adenylosuccinate_synth_dom1"/>
</dbReference>
<dbReference type="InterPro" id="IPR042110">
    <property type="entry name" value="Adenylosuccinate_synth_dom2"/>
</dbReference>
<dbReference type="InterPro" id="IPR042111">
    <property type="entry name" value="Adenylosuccinate_synth_dom3"/>
</dbReference>
<dbReference type="InterPro" id="IPR001114">
    <property type="entry name" value="Adenylosuccinate_synthetase"/>
</dbReference>
<dbReference type="InterPro" id="IPR027417">
    <property type="entry name" value="P-loop_NTPase"/>
</dbReference>
<dbReference type="NCBIfam" id="NF002223">
    <property type="entry name" value="PRK01117.1"/>
    <property type="match status" value="1"/>
</dbReference>
<dbReference type="NCBIfam" id="TIGR00184">
    <property type="entry name" value="purA"/>
    <property type="match status" value="1"/>
</dbReference>
<dbReference type="PANTHER" id="PTHR11846">
    <property type="entry name" value="ADENYLOSUCCINATE SYNTHETASE"/>
    <property type="match status" value="1"/>
</dbReference>
<dbReference type="PANTHER" id="PTHR11846:SF0">
    <property type="entry name" value="ADENYLOSUCCINATE SYNTHETASE"/>
    <property type="match status" value="1"/>
</dbReference>
<dbReference type="Pfam" id="PF00709">
    <property type="entry name" value="Adenylsucc_synt"/>
    <property type="match status" value="1"/>
</dbReference>
<dbReference type="SMART" id="SM00788">
    <property type="entry name" value="Adenylsucc_synt"/>
    <property type="match status" value="1"/>
</dbReference>
<dbReference type="SUPFAM" id="SSF52540">
    <property type="entry name" value="P-loop containing nucleoside triphosphate hydrolases"/>
    <property type="match status" value="1"/>
</dbReference>
<dbReference type="PROSITE" id="PS01266">
    <property type="entry name" value="ADENYLOSUCCIN_SYN_1"/>
    <property type="match status" value="1"/>
</dbReference>
<dbReference type="PROSITE" id="PS00513">
    <property type="entry name" value="ADENYLOSUCCIN_SYN_2"/>
    <property type="match status" value="1"/>
</dbReference>
<reference key="1">
    <citation type="journal article" date="2007" name="PLoS ONE">
        <title>Genome sequencing shows that European isolates of Francisella tularensis subspecies tularensis are almost identical to US laboratory strain Schu S4.</title>
        <authorList>
            <person name="Chaudhuri R.R."/>
            <person name="Ren C.-P."/>
            <person name="Desmond L."/>
            <person name="Vincent G.A."/>
            <person name="Silman N.J."/>
            <person name="Brehm J.K."/>
            <person name="Elmore M.J."/>
            <person name="Hudson M.J."/>
            <person name="Forsman M."/>
            <person name="Isherwood K.E."/>
            <person name="Gurycova D."/>
            <person name="Minton N.P."/>
            <person name="Titball R.W."/>
            <person name="Pallen M.J."/>
            <person name="Vipond R."/>
        </authorList>
    </citation>
    <scope>NUCLEOTIDE SEQUENCE [LARGE SCALE GENOMIC DNA]</scope>
    <source>
        <strain>FSC 198</strain>
    </source>
</reference>
<sequence length="428" mass="46899">MSNIVIVGAQWGDEGKGKIADTLAEKADLVVRYQGGNNAGHTLVVNGKKTFLHLIPSGVLRQHTKCVIGHGVVLDPVALDEEITRLQAKGIAISAENLFVSESCTIITSYHKLLDAVRESNTSEKIGTTGKGIGPAYEDKVSRKGIKFKHLFDKDLLRSRLAISLAEKETLFRDLYKVEYPTLEQEFDKLFALGQKLKQYAADTFSIIDQAIAAGKNVVYEGAQGVLLDVDYGTYPFVTSSNTSVAGVYSGATTAGHGLDHVIGITKAYTTRVGEGPFPTELFDDVGKFIQHKGGEIGVTTGRIRRCGWLDLPLLKYSAKCSNLTSIALTKVDVLSDMDTLKVCIGYKYEGKEIYCAYPGIDLYKVEPILVEMEPFSIDETVTKDNMPAALKTYLKTIENHVGIPISSLAYGPSREQILFFEDYFKKG</sequence>
<evidence type="ECO:0000255" key="1">
    <source>
        <dbReference type="HAMAP-Rule" id="MF_00011"/>
    </source>
</evidence>
<proteinExistence type="inferred from homology"/>
<comment type="function">
    <text evidence="1">Plays an important role in the de novo pathway of purine nucleotide biosynthesis. Catalyzes the first committed step in the biosynthesis of AMP from IMP.</text>
</comment>
<comment type="catalytic activity">
    <reaction evidence="1">
        <text>IMP + L-aspartate + GTP = N(6)-(1,2-dicarboxyethyl)-AMP + GDP + phosphate + 2 H(+)</text>
        <dbReference type="Rhea" id="RHEA:15753"/>
        <dbReference type="ChEBI" id="CHEBI:15378"/>
        <dbReference type="ChEBI" id="CHEBI:29991"/>
        <dbReference type="ChEBI" id="CHEBI:37565"/>
        <dbReference type="ChEBI" id="CHEBI:43474"/>
        <dbReference type="ChEBI" id="CHEBI:57567"/>
        <dbReference type="ChEBI" id="CHEBI:58053"/>
        <dbReference type="ChEBI" id="CHEBI:58189"/>
        <dbReference type="EC" id="6.3.4.4"/>
    </reaction>
</comment>
<comment type="cofactor">
    <cofactor evidence="1">
        <name>Mg(2+)</name>
        <dbReference type="ChEBI" id="CHEBI:18420"/>
    </cofactor>
    <text evidence="1">Binds 1 Mg(2+) ion per subunit.</text>
</comment>
<comment type="pathway">
    <text evidence="1">Purine metabolism; AMP biosynthesis via de novo pathway; AMP from IMP: step 1/2.</text>
</comment>
<comment type="subunit">
    <text evidence="1">Homodimer.</text>
</comment>
<comment type="subcellular location">
    <subcellularLocation>
        <location evidence="1">Cytoplasm</location>
    </subcellularLocation>
</comment>
<comment type="similarity">
    <text evidence="1">Belongs to the adenylosuccinate synthetase family.</text>
</comment>
<feature type="chain" id="PRO_1000000822" description="Adenylosuccinate synthetase">
    <location>
        <begin position="1"/>
        <end position="428"/>
    </location>
</feature>
<feature type="active site" description="Proton acceptor" evidence="1">
    <location>
        <position position="13"/>
    </location>
</feature>
<feature type="active site" description="Proton donor" evidence="1">
    <location>
        <position position="41"/>
    </location>
</feature>
<feature type="binding site" evidence="1">
    <location>
        <begin position="12"/>
        <end position="18"/>
    </location>
    <ligand>
        <name>GTP</name>
        <dbReference type="ChEBI" id="CHEBI:37565"/>
    </ligand>
</feature>
<feature type="binding site" description="in other chain" evidence="1">
    <location>
        <begin position="13"/>
        <end position="16"/>
    </location>
    <ligand>
        <name>IMP</name>
        <dbReference type="ChEBI" id="CHEBI:58053"/>
        <note>ligand shared between dimeric partners</note>
    </ligand>
</feature>
<feature type="binding site" evidence="1">
    <location>
        <position position="13"/>
    </location>
    <ligand>
        <name>Mg(2+)</name>
        <dbReference type="ChEBI" id="CHEBI:18420"/>
    </ligand>
</feature>
<feature type="binding site" description="in other chain" evidence="1">
    <location>
        <begin position="38"/>
        <end position="41"/>
    </location>
    <ligand>
        <name>IMP</name>
        <dbReference type="ChEBI" id="CHEBI:58053"/>
        <note>ligand shared between dimeric partners</note>
    </ligand>
</feature>
<feature type="binding site" evidence="1">
    <location>
        <begin position="40"/>
        <end position="42"/>
    </location>
    <ligand>
        <name>GTP</name>
        <dbReference type="ChEBI" id="CHEBI:37565"/>
    </ligand>
</feature>
<feature type="binding site" evidence="1">
    <location>
        <position position="40"/>
    </location>
    <ligand>
        <name>Mg(2+)</name>
        <dbReference type="ChEBI" id="CHEBI:18420"/>
    </ligand>
</feature>
<feature type="binding site" description="in other chain" evidence="1">
    <location>
        <position position="129"/>
    </location>
    <ligand>
        <name>IMP</name>
        <dbReference type="ChEBI" id="CHEBI:58053"/>
        <note>ligand shared between dimeric partners</note>
    </ligand>
</feature>
<feature type="binding site" evidence="1">
    <location>
        <position position="143"/>
    </location>
    <ligand>
        <name>IMP</name>
        <dbReference type="ChEBI" id="CHEBI:58053"/>
        <note>ligand shared between dimeric partners</note>
    </ligand>
</feature>
<feature type="binding site" description="in other chain" evidence="1">
    <location>
        <position position="224"/>
    </location>
    <ligand>
        <name>IMP</name>
        <dbReference type="ChEBI" id="CHEBI:58053"/>
        <note>ligand shared between dimeric partners</note>
    </ligand>
</feature>
<feature type="binding site" description="in other chain" evidence="1">
    <location>
        <position position="239"/>
    </location>
    <ligand>
        <name>IMP</name>
        <dbReference type="ChEBI" id="CHEBI:58053"/>
        <note>ligand shared between dimeric partners</note>
    </ligand>
</feature>
<feature type="binding site" evidence="1">
    <location>
        <begin position="299"/>
        <end position="305"/>
    </location>
    <ligand>
        <name>substrate</name>
    </ligand>
</feature>
<feature type="binding site" description="in other chain" evidence="1">
    <location>
        <position position="303"/>
    </location>
    <ligand>
        <name>IMP</name>
        <dbReference type="ChEBI" id="CHEBI:58053"/>
        <note>ligand shared between dimeric partners</note>
    </ligand>
</feature>
<feature type="binding site" evidence="1">
    <location>
        <position position="305"/>
    </location>
    <ligand>
        <name>GTP</name>
        <dbReference type="ChEBI" id="CHEBI:37565"/>
    </ligand>
</feature>
<feature type="binding site" evidence="1">
    <location>
        <begin position="331"/>
        <end position="333"/>
    </location>
    <ligand>
        <name>GTP</name>
        <dbReference type="ChEBI" id="CHEBI:37565"/>
    </ligand>
</feature>
<feature type="binding site" evidence="1">
    <location>
        <begin position="410"/>
        <end position="412"/>
    </location>
    <ligand>
        <name>GTP</name>
        <dbReference type="ChEBI" id="CHEBI:37565"/>
    </ligand>
</feature>
<name>PURA_FRAT1</name>
<gene>
    <name evidence="1" type="primary">purA</name>
    <name type="ordered locus">FTF0204</name>
</gene>
<organism>
    <name type="scientific">Francisella tularensis subsp. tularensis (strain FSC 198)</name>
    <dbReference type="NCBI Taxonomy" id="393115"/>
    <lineage>
        <taxon>Bacteria</taxon>
        <taxon>Pseudomonadati</taxon>
        <taxon>Pseudomonadota</taxon>
        <taxon>Gammaproteobacteria</taxon>
        <taxon>Thiotrichales</taxon>
        <taxon>Francisellaceae</taxon>
        <taxon>Francisella</taxon>
    </lineage>
</organism>
<keyword id="KW-0963">Cytoplasm</keyword>
<keyword id="KW-0342">GTP-binding</keyword>
<keyword id="KW-0436">Ligase</keyword>
<keyword id="KW-0460">Magnesium</keyword>
<keyword id="KW-0479">Metal-binding</keyword>
<keyword id="KW-0547">Nucleotide-binding</keyword>
<keyword id="KW-0658">Purine biosynthesis</keyword>
<accession>Q14JN1</accession>